<organism>
    <name type="scientific">Bos taurus</name>
    <name type="common">Bovine</name>
    <dbReference type="NCBI Taxonomy" id="9913"/>
    <lineage>
        <taxon>Eukaryota</taxon>
        <taxon>Metazoa</taxon>
        <taxon>Chordata</taxon>
        <taxon>Craniata</taxon>
        <taxon>Vertebrata</taxon>
        <taxon>Euteleostomi</taxon>
        <taxon>Mammalia</taxon>
        <taxon>Eutheria</taxon>
        <taxon>Laurasiatheria</taxon>
        <taxon>Artiodactyla</taxon>
        <taxon>Ruminantia</taxon>
        <taxon>Pecora</taxon>
        <taxon>Bovidae</taxon>
        <taxon>Bovinae</taxon>
        <taxon>Bos</taxon>
    </lineage>
</organism>
<gene>
    <name type="primary">RPL27A</name>
</gene>
<feature type="chain" id="PRO_0000239270" description="Large ribosomal subunit protein uL15">
    <location>
        <begin position="1"/>
        <end position="148"/>
    </location>
</feature>
<feature type="region of interest" description="Disordered" evidence="2">
    <location>
        <begin position="1"/>
        <end position="37"/>
    </location>
</feature>
<feature type="compositionally biased region" description="Basic residues" evidence="2">
    <location>
        <begin position="1"/>
        <end position="30"/>
    </location>
</feature>
<feature type="modified residue" description="(3S)-3-hydroxyhistidine" evidence="1">
    <location>
        <position position="39"/>
    </location>
</feature>
<feature type="modified residue" description="N6-acetyllysine" evidence="1">
    <location>
        <position position="47"/>
    </location>
</feature>
<feature type="modified residue" description="N6-acetyllysine" evidence="1">
    <location>
        <position position="55"/>
    </location>
</feature>
<feature type="modified residue" description="Phosphoserine" evidence="1">
    <location>
        <position position="68"/>
    </location>
</feature>
<feature type="modified residue" description="N6-acetyllysine" evidence="1">
    <location>
        <position position="110"/>
    </location>
</feature>
<feature type="sequence conflict" description="In Ref. 2; AAI09684." evidence="3" ref="2">
    <original>S</original>
    <variation>T</variation>
    <location>
        <position position="3"/>
    </location>
</feature>
<evidence type="ECO:0000250" key="1">
    <source>
        <dbReference type="UniProtKB" id="P46776"/>
    </source>
</evidence>
<evidence type="ECO:0000256" key="2">
    <source>
        <dbReference type="SAM" id="MobiDB-lite"/>
    </source>
</evidence>
<evidence type="ECO:0000305" key="3"/>
<comment type="function">
    <text evidence="1">Component of the large ribosomal subunit. The ribosome is a large ribonucleoprotein complex responsible for the synthesis of proteins in the cell.</text>
</comment>
<comment type="subunit">
    <text evidence="1">Component of the large ribosomal subunit.</text>
</comment>
<comment type="subcellular location">
    <subcellularLocation>
        <location evidence="1">Cytoplasm</location>
    </subcellularLocation>
</comment>
<comment type="PTM">
    <text evidence="1">Hydroxylated on His-39 by MINA.</text>
</comment>
<comment type="similarity">
    <text evidence="3">Belongs to the universal ribosomal protein uL15 family.</text>
</comment>
<proteinExistence type="evidence at transcript level"/>
<protein>
    <recommendedName>
        <fullName evidence="3">Large ribosomal subunit protein uL15</fullName>
    </recommendedName>
    <alternativeName>
        <fullName>60S ribosomal protein L27a</fullName>
    </alternativeName>
</protein>
<name>RL27A_BOVIN</name>
<dbReference type="EMBL" id="AY911324">
    <property type="protein sequence ID" value="AAW82092.1"/>
    <property type="molecule type" value="mRNA"/>
</dbReference>
<dbReference type="EMBL" id="BC109683">
    <property type="protein sequence ID" value="AAI09684.1"/>
    <property type="molecule type" value="mRNA"/>
</dbReference>
<dbReference type="RefSeq" id="NP_001019642.1">
    <property type="nucleotide sequence ID" value="NM_001024471.2"/>
</dbReference>
<dbReference type="SMR" id="Q56K03"/>
<dbReference type="FunCoup" id="Q56K03">
    <property type="interactions" value="2429"/>
</dbReference>
<dbReference type="STRING" id="9913.ENSBTAP00000007036"/>
<dbReference type="PaxDb" id="9913-ENSBTAP00000042947"/>
<dbReference type="PeptideAtlas" id="Q56K03"/>
<dbReference type="GeneID" id="404190"/>
<dbReference type="KEGG" id="bta:404190"/>
<dbReference type="CTD" id="6157"/>
<dbReference type="VEuPathDB" id="HostDB:ENSBTAG00000005349"/>
<dbReference type="eggNOG" id="KOG1742">
    <property type="taxonomic scope" value="Eukaryota"/>
</dbReference>
<dbReference type="HOGENOM" id="CLU_109163_1_0_1"/>
<dbReference type="InParanoid" id="Q56K03"/>
<dbReference type="OMA" id="WGRVGQH"/>
<dbReference type="OrthoDB" id="61900at2759"/>
<dbReference type="TreeFam" id="TF313742"/>
<dbReference type="Reactome" id="R-BTA-156827">
    <property type="pathway name" value="L13a-mediated translational silencing of Ceruloplasmin expression"/>
</dbReference>
<dbReference type="Reactome" id="R-BTA-1799339">
    <property type="pathway name" value="SRP-dependent cotranslational protein targeting to membrane"/>
</dbReference>
<dbReference type="Reactome" id="R-BTA-6791226">
    <property type="pathway name" value="Major pathway of rRNA processing in the nucleolus and cytosol"/>
</dbReference>
<dbReference type="Reactome" id="R-BTA-72689">
    <property type="pathway name" value="Formation of a pool of free 40S subunits"/>
</dbReference>
<dbReference type="Reactome" id="R-BTA-72706">
    <property type="pathway name" value="GTP hydrolysis and joining of the 60S ribosomal subunit"/>
</dbReference>
<dbReference type="Reactome" id="R-BTA-9629569">
    <property type="pathway name" value="Protein hydroxylation"/>
</dbReference>
<dbReference type="Reactome" id="R-BTA-975956">
    <property type="pathway name" value="Nonsense Mediated Decay (NMD) independent of the Exon Junction Complex (EJC)"/>
</dbReference>
<dbReference type="Reactome" id="R-BTA-975957">
    <property type="pathway name" value="Nonsense Mediated Decay (NMD) enhanced by the Exon Junction Complex (EJC)"/>
</dbReference>
<dbReference type="CD-CODE" id="D7FE2080">
    <property type="entry name" value="Nucleolus"/>
</dbReference>
<dbReference type="Proteomes" id="UP000009136">
    <property type="component" value="Chromosome 15"/>
</dbReference>
<dbReference type="Bgee" id="ENSBTAG00000005349">
    <property type="expression patterns" value="Expressed in isthmus of fallopian tube and 107 other cell types or tissues"/>
</dbReference>
<dbReference type="GO" id="GO:0022625">
    <property type="term" value="C:cytosolic large ribosomal subunit"/>
    <property type="evidence" value="ECO:0000318"/>
    <property type="project" value="GO_Central"/>
</dbReference>
<dbReference type="GO" id="GO:0003735">
    <property type="term" value="F:structural constituent of ribosome"/>
    <property type="evidence" value="ECO:0000318"/>
    <property type="project" value="GO_Central"/>
</dbReference>
<dbReference type="GO" id="GO:0006412">
    <property type="term" value="P:translation"/>
    <property type="evidence" value="ECO:0007669"/>
    <property type="project" value="InterPro"/>
</dbReference>
<dbReference type="FunFam" id="3.100.10.10:FF:000024">
    <property type="entry name" value="RPL27A isoform 10"/>
    <property type="match status" value="1"/>
</dbReference>
<dbReference type="Gene3D" id="3.100.10.10">
    <property type="match status" value="1"/>
</dbReference>
<dbReference type="Gene3D" id="4.10.990.10">
    <property type="match status" value="1"/>
</dbReference>
<dbReference type="HAMAP" id="MF_01341">
    <property type="entry name" value="Ribosomal_uL15"/>
    <property type="match status" value="1"/>
</dbReference>
<dbReference type="InterPro" id="IPR027386">
    <property type="entry name" value="Rbsml_uL15_N"/>
</dbReference>
<dbReference type="InterPro" id="IPR030878">
    <property type="entry name" value="Ribosomal_uL15"/>
</dbReference>
<dbReference type="InterPro" id="IPR021131">
    <property type="entry name" value="Ribosomal_uL15/eL18"/>
</dbReference>
<dbReference type="InterPro" id="IPR036227">
    <property type="entry name" value="Ribosomal_uL15/eL18_sf"/>
</dbReference>
<dbReference type="InterPro" id="IPR001196">
    <property type="entry name" value="Ribosomal_uL15_CS"/>
</dbReference>
<dbReference type="PANTHER" id="PTHR11721">
    <property type="entry name" value="60S RIBOSOMAL PROTEIN L27A"/>
    <property type="match status" value="1"/>
</dbReference>
<dbReference type="PANTHER" id="PTHR11721:SF3">
    <property type="entry name" value="LARGE RIBOSOMAL SUBUNIT PROTEIN UL15"/>
    <property type="match status" value="1"/>
</dbReference>
<dbReference type="Pfam" id="PF00828">
    <property type="entry name" value="Ribosomal_L27A"/>
    <property type="match status" value="1"/>
</dbReference>
<dbReference type="SUPFAM" id="SSF52080">
    <property type="entry name" value="Ribosomal proteins L15p and L18e"/>
    <property type="match status" value="1"/>
</dbReference>
<dbReference type="PROSITE" id="PS00475">
    <property type="entry name" value="RIBOSOMAL_L15"/>
    <property type="match status" value="1"/>
</dbReference>
<accession>Q56K03</accession>
<accession>Q2TBT4</accession>
<reference key="1">
    <citation type="submission" date="2005-01" db="EMBL/GenBank/DDBJ databases">
        <title>Analysis of sequences obtained from constructed full-length bovine cDNA libraries.</title>
        <authorList>
            <person name="Yu J."/>
            <person name="Meng Y."/>
            <person name="Wang Z."/>
            <person name="Hansen C."/>
            <person name="Li C."/>
            <person name="Moore S.S."/>
        </authorList>
    </citation>
    <scope>NUCLEOTIDE SEQUENCE [LARGE SCALE MRNA]</scope>
    <source>
        <tissue>Lymphoid epithelium</tissue>
    </source>
</reference>
<reference key="2">
    <citation type="submission" date="2005-11" db="EMBL/GenBank/DDBJ databases">
        <authorList>
            <consortium name="NIH - Mammalian Gene Collection (MGC) project"/>
        </authorList>
    </citation>
    <scope>NUCLEOTIDE SEQUENCE [LARGE SCALE MRNA]</scope>
    <source>
        <strain>Crossbred X Angus</strain>
        <tissue>Liver</tissue>
    </source>
</reference>
<keyword id="KW-0007">Acetylation</keyword>
<keyword id="KW-0963">Cytoplasm</keyword>
<keyword id="KW-0379">Hydroxylation</keyword>
<keyword id="KW-0597">Phosphoprotein</keyword>
<keyword id="KW-1185">Reference proteome</keyword>
<keyword id="KW-0687">Ribonucleoprotein</keyword>
<keyword id="KW-0689">Ribosomal protein</keyword>
<sequence>MPSRLRKTRKLRGHVSHGHGRIGKHRKHPGGRGNAGGMHHHRINFDKYHPGYFGKVGMRHYHLKRNQSFCPTVNLDKLWTLVSEQTRVNAAKNKTGAAPIIDVVRSGYYKVLGKGKLPKQPVIVKAKFFSRRAEEKIKGVGGACVLVA</sequence>